<dbReference type="EC" id="2.7.7.6"/>
<dbReference type="EMBL" id="X14399">
    <property type="protein sequence ID" value="CAA32572.1"/>
    <property type="molecule type" value="Genomic_DNA"/>
</dbReference>
<dbReference type="SMR" id="P16355"/>
<dbReference type="IntAct" id="P16355">
    <property type="interactions" value="2"/>
</dbReference>
<dbReference type="MINT" id="P16355"/>
<dbReference type="GO" id="GO:0005739">
    <property type="term" value="C:mitochondrion"/>
    <property type="evidence" value="ECO:0007669"/>
    <property type="project" value="GOC"/>
</dbReference>
<dbReference type="GO" id="GO:0009536">
    <property type="term" value="C:plastid"/>
    <property type="evidence" value="ECO:0007669"/>
    <property type="project" value="GOC"/>
</dbReference>
<dbReference type="GO" id="GO:0005736">
    <property type="term" value="C:RNA polymerase I complex"/>
    <property type="evidence" value="ECO:0007669"/>
    <property type="project" value="TreeGrafter"/>
</dbReference>
<dbReference type="GO" id="GO:0003677">
    <property type="term" value="F:DNA binding"/>
    <property type="evidence" value="ECO:0007669"/>
    <property type="project" value="InterPro"/>
</dbReference>
<dbReference type="GO" id="GO:0003899">
    <property type="term" value="F:DNA-directed RNA polymerase activity"/>
    <property type="evidence" value="ECO:0007669"/>
    <property type="project" value="UniProtKB-EC"/>
</dbReference>
<dbReference type="GO" id="GO:0046872">
    <property type="term" value="F:metal ion binding"/>
    <property type="evidence" value="ECO:0007669"/>
    <property type="project" value="UniProtKB-KW"/>
</dbReference>
<dbReference type="GO" id="GO:0006351">
    <property type="term" value="P:DNA-templated transcription"/>
    <property type="evidence" value="ECO:0007669"/>
    <property type="project" value="InterPro"/>
</dbReference>
<dbReference type="CDD" id="cd01435">
    <property type="entry name" value="RNAP_I_RPA1_N"/>
    <property type="match status" value="1"/>
</dbReference>
<dbReference type="FunFam" id="2.40.40.20:FF:000019">
    <property type="entry name" value="DNA-directed RNA polymerase II subunit RPB1"/>
    <property type="match status" value="1"/>
</dbReference>
<dbReference type="FunFam" id="1.10.274.100:FF:000012">
    <property type="entry name" value="DNA-directed RNA polymerase subunit"/>
    <property type="match status" value="1"/>
</dbReference>
<dbReference type="Gene3D" id="1.10.132.30">
    <property type="match status" value="1"/>
</dbReference>
<dbReference type="Gene3D" id="2.40.40.20">
    <property type="match status" value="1"/>
</dbReference>
<dbReference type="Gene3D" id="6.10.250.2940">
    <property type="match status" value="1"/>
</dbReference>
<dbReference type="Gene3D" id="6.20.50.80">
    <property type="match status" value="1"/>
</dbReference>
<dbReference type="Gene3D" id="3.30.1490.180">
    <property type="entry name" value="RNA polymerase ii"/>
    <property type="match status" value="1"/>
</dbReference>
<dbReference type="Gene3D" id="1.10.274.100">
    <property type="entry name" value="RNA polymerase Rpb1, domain 3"/>
    <property type="match status" value="1"/>
</dbReference>
<dbReference type="InterPro" id="IPR015699">
    <property type="entry name" value="DNA-dir_RNA_pol1_lsu_N"/>
</dbReference>
<dbReference type="InterPro" id="IPR045867">
    <property type="entry name" value="DNA-dir_RpoC_beta_prime"/>
</dbReference>
<dbReference type="InterPro" id="IPR000722">
    <property type="entry name" value="RNA_pol_asu"/>
</dbReference>
<dbReference type="InterPro" id="IPR006592">
    <property type="entry name" value="RNA_pol_N"/>
</dbReference>
<dbReference type="InterPro" id="IPR007066">
    <property type="entry name" value="RNA_pol_Rpb1_3"/>
</dbReference>
<dbReference type="InterPro" id="IPR042102">
    <property type="entry name" value="RNA_pol_Rpb1_3_sf"/>
</dbReference>
<dbReference type="InterPro" id="IPR007083">
    <property type="entry name" value="RNA_pol_Rpb1_4"/>
</dbReference>
<dbReference type="InterPro" id="IPR007081">
    <property type="entry name" value="RNA_pol_Rpb1_5"/>
</dbReference>
<dbReference type="InterPro" id="IPR038120">
    <property type="entry name" value="Rpb1_funnel_sf"/>
</dbReference>
<dbReference type="PANTHER" id="PTHR19376">
    <property type="entry name" value="DNA-DIRECTED RNA POLYMERASE"/>
    <property type="match status" value="1"/>
</dbReference>
<dbReference type="PANTHER" id="PTHR19376:SF11">
    <property type="entry name" value="DNA-DIRECTED RNA POLYMERASE I SUBUNIT RPA1"/>
    <property type="match status" value="1"/>
</dbReference>
<dbReference type="Pfam" id="PF00623">
    <property type="entry name" value="RNA_pol_Rpb1_2"/>
    <property type="match status" value="1"/>
</dbReference>
<dbReference type="Pfam" id="PF04983">
    <property type="entry name" value="RNA_pol_Rpb1_3"/>
    <property type="match status" value="1"/>
</dbReference>
<dbReference type="Pfam" id="PF05000">
    <property type="entry name" value="RNA_pol_Rpb1_4"/>
    <property type="match status" value="1"/>
</dbReference>
<dbReference type="Pfam" id="PF04998">
    <property type="entry name" value="RNA_pol_Rpb1_5"/>
    <property type="match status" value="1"/>
</dbReference>
<dbReference type="SMART" id="SM00663">
    <property type="entry name" value="RPOLA_N"/>
    <property type="match status" value="1"/>
</dbReference>
<dbReference type="SUPFAM" id="SSF64484">
    <property type="entry name" value="beta and beta-prime subunits of DNA dependent RNA-polymerase"/>
    <property type="match status" value="1"/>
</dbReference>
<sequence length="1744" mass="191769">MSGIAFVEVRTRAGQEDRSAPWRPVVRNGENHATFYDTRMGNFDANPFPPQTCQTCAASLTGKYGNERCHGHFGFVGMPRIRPGSAHSDSDRLVVLNPHLAMDADRLFRAKCFFCHKFRAPTFDVERFRQALVLADHGLPGDALHLLDTVPTAKGHDAMLNHRRMANEEIVNDVSILQSYVDRILRQRASGCSEEDAKARVTMAQKGTVDVRNDICNMAISHLRSFSGPCSHCTAISPTFLKRGGIIFFLFRKSNLVTNIAKGFLTQQEVSEWEAVNRLHGRTGTYFDGRQMLFHMKNLFAKEQAILGLLYPNLGEPSVFTKTNKVVPASERYKLFFLDRILVPPLPLRLSSGVRVNDNGLIIPDEQTRALSDILGFVEQIECFHTLSANSTNGRSFITDAQRAVNESNLRNLQQKVDEFYAEIVNSFAKKEGLFRMNMMGKRVNQACRSVISPDPFVEPNEVLLPRPLARALSFPEQVTCFAPARMNLLKHCVVNGPRKYPGATHIELRHANGEIRSVDLNVPEQTRRQHAARFFAMAQSGVTLIVYRHILNGDRVIFNRQPTLHKPSMMGYRVKVLSGSKTIRFHYVNGNSFNADFDGDEMNVHVPQSIETRAEVETLMDANINYLVPTSGRPIRGLIQDHVAAGVLVTLRDKFFDHSTFVQLVYNGVGPYIQENVGITLAELIPIPAILMPRPMWTGKQLISVMVRFSSGLSAASDCGREIEGGITLKGTSQIQPSAFDRIPAGSCDAVRAKSGAVVDSTVMFANSELITGFMCKKQLGASNMSAPHHVYELYGPHRTGQLFAAFGRVLLLALRKEGLSLAMDDMFLVDEERRCDLLRKLDDIALDVPDEEATAAPMIADYATKIQQEFVPQRMLVPFPKNHLLLMTISGAKGSNLNATQMSLQLGQQLFDGLRVKRMNSSKTLPSFFTNEKRARSFGFAMGSFASGIRPAEYTIHAMAGRDGLIDTAVKTSRSGHLQRCLIKGLESLVVHWDRTVRDSNGSVIQFMYGGDGLDPCKASTLTAWEMMKDNVVDVSKRFGGDASESVAGAEDGAAAGLKEMRNEDGKPTTEAVQNAHMEQQLSTYPLPASLDKSLSEYLCKKADFPLFRKVSTLARWDAKQQLKERLQQRRQKWVGAFEKTLADITARRRLWALCEPGEPVGLLAAQAAGEPSTQMTLNTFHTAGSTVSHVTEGIPRLRELLIYASVNKAAVVVPVTNATEEDEKVIAKMLRAGVAAKLTDCLAKVTDGAGGQSASSSMQRNLNTGFGKGYHYHVARGRTGMVITVSFLFSRSCLEELRKRMCMSPSEHRQSFTEALKNVVRLIMRSLSAVPREKESGDGSGNTGGMKGGSGRADRKRKRSGPDDGGGPLGGTFGDEIMRIEEGTDSDDGMSERSSIGGGRAGSEVSSLHSDGTDTRGIAGSDTGGPQRRRGSVESGRGDDASDSEAADPDLYARRSGSPARDAEDGGEMQDRDGTDWGGTSMQGVVGYDNFPEIHMSFTKSNFGAVIAPLSTAAAARDGVVQLHEDFFIVNAVLRTASDVIAVIPDVVDNALEAQRMPSWLPQFGSLTFTRLKDKGSGQLVFQGPGSTMRNVMSFLSLFTVGIKSIKLHQACSTDIRDMGTYFGIESGYAALYDELNKLFNRYNVDPRHLSLIADTSTHRGRWENFNFTGVISTSASPLFQMTFASSKRWLHRAVSRGMSDDLESFSSAIMVGERPRVGTASVRLSTDTAILRDVLERNFA</sequence>
<comment type="function">
    <text evidence="1">DNA-dependent RNA polymerase catalyzes the transcription of DNA into RNA using the four ribonucleoside triphosphates as substrates. Largest and catalytic core component of RNA polymerase I which synthesizes ribosomal RNA precursors. Forms the polymerase active center together with the second largest subunit. A single stranded DNA template strand of the promoter is positioned within the central active site cleft of Pol I. A bridging helix emanates from RPA1 and crosses the cleft near the catalytic site and is thought to promote translocation of Pol I by acting as a ratchet that moves the RNA-DNA hybrid through the active site by switching from straight to bent conformations at each step of nucleotide addition (By similarity).</text>
</comment>
<comment type="catalytic activity">
    <reaction>
        <text>RNA(n) + a ribonucleoside 5'-triphosphate = RNA(n+1) + diphosphate</text>
        <dbReference type="Rhea" id="RHEA:21248"/>
        <dbReference type="Rhea" id="RHEA-COMP:14527"/>
        <dbReference type="Rhea" id="RHEA-COMP:17342"/>
        <dbReference type="ChEBI" id="CHEBI:33019"/>
        <dbReference type="ChEBI" id="CHEBI:61557"/>
        <dbReference type="ChEBI" id="CHEBI:140395"/>
        <dbReference type="EC" id="2.7.7.6"/>
    </reaction>
</comment>
<comment type="subunit">
    <text evidence="1">Component of the RNA polymerase I (Pol I) complex consisting of at least 13 subunits.</text>
</comment>
<comment type="interaction">
    <interactant intactId="EBI-8549756">
        <id>P16355</id>
    </interactant>
    <interactant intactId="EBI-8549776">
        <id>Q381Y8</id>
        <label>Tb11.01.6090</label>
    </interactant>
    <organismsDiffer>true</organismsDiffer>
    <experiments>3</experiments>
</comment>
<comment type="subcellular location">
    <subcellularLocation>
        <location evidence="1">Nucleus</location>
        <location evidence="1">Nucleolus</location>
    </subcellularLocation>
</comment>
<comment type="PTM">
    <text evidence="3">Phosphorylated.</text>
</comment>
<comment type="similarity">
    <text evidence="4">Belongs to the RNA polymerase beta' chain family.</text>
</comment>
<name>RPA1_TRYBB</name>
<feature type="chain" id="PRO_0000073928" description="DNA-directed RNA polymerase I subunit RPA1">
    <location>
        <begin position="1"/>
        <end position="1744"/>
    </location>
</feature>
<feature type="region of interest" description="Bridging helix" evidence="1">
    <location>
        <begin position="953"/>
        <end position="965"/>
    </location>
</feature>
<feature type="region of interest" description="Disordered" evidence="2">
    <location>
        <begin position="1333"/>
        <end position="1484"/>
    </location>
</feature>
<feature type="compositionally biased region" description="Gly residues" evidence="2">
    <location>
        <begin position="1341"/>
        <end position="1354"/>
    </location>
</feature>
<feature type="compositionally biased region" description="Gly residues" evidence="2">
    <location>
        <begin position="1366"/>
        <end position="1376"/>
    </location>
</feature>
<feature type="compositionally biased region" description="Basic and acidic residues" evidence="2">
    <location>
        <begin position="1464"/>
        <end position="1478"/>
    </location>
</feature>
<feature type="binding site" evidence="1">
    <location>
        <position position="56"/>
    </location>
    <ligand>
        <name>Zn(2+)</name>
        <dbReference type="ChEBI" id="CHEBI:29105"/>
    </ligand>
</feature>
<feature type="binding site" evidence="1">
    <location>
        <position position="69"/>
    </location>
    <ligand>
        <name>Zn(2+)</name>
        <dbReference type="ChEBI" id="CHEBI:29105"/>
    </ligand>
</feature>
<feature type="binding site" evidence="1">
    <location>
        <position position="72"/>
    </location>
    <ligand>
        <name>Zn(2+)</name>
        <dbReference type="ChEBI" id="CHEBI:29105"/>
    </ligand>
</feature>
<feature type="binding site" evidence="1">
    <location>
        <position position="597"/>
    </location>
    <ligand>
        <name>Mg(2+)</name>
        <dbReference type="ChEBI" id="CHEBI:18420"/>
        <note>catalytic</note>
    </ligand>
</feature>
<feature type="binding site" evidence="1">
    <location>
        <position position="599"/>
    </location>
    <ligand>
        <name>Mg(2+)</name>
        <dbReference type="ChEBI" id="CHEBI:18420"/>
        <note>catalytic</note>
    </ligand>
</feature>
<feature type="binding site" evidence="1">
    <location>
        <position position="601"/>
    </location>
    <ligand>
        <name>Mg(2+)</name>
        <dbReference type="ChEBI" id="CHEBI:18420"/>
        <note>catalytic</note>
    </ligand>
</feature>
<organism>
    <name type="scientific">Trypanosoma brucei brucei</name>
    <dbReference type="NCBI Taxonomy" id="5702"/>
    <lineage>
        <taxon>Eukaryota</taxon>
        <taxon>Discoba</taxon>
        <taxon>Euglenozoa</taxon>
        <taxon>Kinetoplastea</taxon>
        <taxon>Metakinetoplastina</taxon>
        <taxon>Trypanosomatida</taxon>
        <taxon>Trypanosomatidae</taxon>
        <taxon>Trypanosoma</taxon>
    </lineage>
</organism>
<protein>
    <recommendedName>
        <fullName>DNA-directed RNA polymerase I subunit RPA1</fullName>
        <shortName>TbRPA1</shortName>
        <ecNumber>2.7.7.6</ecNumber>
    </recommendedName>
    <alternativeName>
        <fullName>DNA-directed RNA polymerase I largest subunit</fullName>
    </alternativeName>
</protein>
<accession>P16355</accession>
<evidence type="ECO:0000250" key="1"/>
<evidence type="ECO:0000256" key="2">
    <source>
        <dbReference type="SAM" id="MobiDB-lite"/>
    </source>
</evidence>
<evidence type="ECO:0000269" key="3">
    <source>
    </source>
</evidence>
<evidence type="ECO:0000305" key="4"/>
<keyword id="KW-0240">DNA-directed RNA polymerase</keyword>
<keyword id="KW-0460">Magnesium</keyword>
<keyword id="KW-0479">Metal-binding</keyword>
<keyword id="KW-0548">Nucleotidyltransferase</keyword>
<keyword id="KW-0539">Nucleus</keyword>
<keyword id="KW-0597">Phosphoprotein</keyword>
<keyword id="KW-0804">Transcription</keyword>
<keyword id="KW-0808">Transferase</keyword>
<keyword id="KW-0862">Zinc</keyword>
<reference key="1">
    <citation type="journal article" date="1989" name="FEBS Lett.">
        <title>Complete sequence of the gene encoding the largest subunit of RNA polymerase I of Trypanosoma brucei.</title>
        <authorList>
            <person name="Jess W."/>
            <person name="Hammer A."/>
            <person name="Cornelissen A.W.C.A."/>
        </authorList>
    </citation>
    <scope>NUCLEOTIDE SEQUENCE [GENOMIC DNA]</scope>
    <source>
        <strain>427</strain>
    </source>
</reference>
<reference key="2">
    <citation type="journal article" date="1989" name="FEBS Lett.">
        <authorList>
            <person name="Jess W."/>
            <person name="Hammer A."/>
            <person name="Cornelissen A.W.C.A."/>
        </authorList>
    </citation>
    <scope>ERRATUM OF PUBMED:2542092</scope>
    <scope>SEQUENCE REVISION</scope>
</reference>
<reference key="3">
    <citation type="journal article" date="2005" name="Mol. Biochem. Parasitol.">
        <title>Characterization of subunits of the RNA polymerase I complex in Trypanosoma brucei.</title>
        <authorList>
            <person name="Walgraffe D."/>
            <person name="Devaux S."/>
            <person name="Lecordier L."/>
            <person name="Dierick J.F."/>
            <person name="Dieu M."/>
            <person name="Van den Abbeele J."/>
            <person name="Pays E."/>
            <person name="Vanhamme L."/>
        </authorList>
    </citation>
    <scope>IDENTIFICATION IN THE RNA POL I COMPLEX</scope>
    <scope>PHOSPHORYLATION</scope>
</reference>
<reference key="4">
    <citation type="journal article" date="2006" name="Mol. Biochem. Parasitol.">
        <title>Purification of an eight subunit RNA polymerase I complex in Trypanosoma brucei.</title>
        <authorList>
            <person name="Nguyen T.N."/>
            <person name="Schimanski B."/>
            <person name="Zahn A."/>
            <person name="Klumpp B."/>
            <person name="Gunzl A."/>
        </authorList>
    </citation>
    <scope>IDENTIFICATION IN THE RNA POL I COMPLEX</scope>
</reference>
<proteinExistence type="evidence at protein level"/>
<gene>
    <name type="primary">TRP11</name>
</gene>